<organism>
    <name type="scientific">Thermosynechococcus vestitus (strain NIES-2133 / IAM M-273 / BP-1)</name>
    <dbReference type="NCBI Taxonomy" id="197221"/>
    <lineage>
        <taxon>Bacteria</taxon>
        <taxon>Bacillati</taxon>
        <taxon>Cyanobacteriota</taxon>
        <taxon>Cyanophyceae</taxon>
        <taxon>Acaryochloridales</taxon>
        <taxon>Thermosynechococcaceae</taxon>
        <taxon>Thermosynechococcus</taxon>
    </lineage>
</organism>
<sequence>MQPTDPTKFTDKAWEAIVKSQDVAREYRSQYLETEHVMIALLREEGLGQVILERSDIDTEWVLKRLMDFARQQPRVPAGSELYCGRSLDALLDEANRLRQEEEDQFISIEHLLLAFVGDRRIGQRLFRALNCDRQQLAATVKAIRGAQKVLDQNPENKYAALEKYGRDLTEAARQGKLDPVIGRDEEIRRVIQVLSRRTKNNPVLIGEPGVGKTAIAEGLAQRIINGDVPESLKNRRLISLDLGSLVAGAKFRGDFEDRLKAVLHEVTHSEGQIVLFIDELHTVVGAGANQNSSMDASNLLKPMLARGELRCIGATTLDEYRKYIEKDAALERRFQQVYIGQPSVEDTISILRGLKDRYEIHHNVKITDSALVAAAMLSDRYISDRYLPDKAIDLVDEAAAKLKMEITTKPAELEALERRLRQLEMERLSLKQEESLPLSQAPLQATRDRLQRIEAEIAQLQPRQQAMQARWQAEKELLERINSLKEEEDQVKLQIEQAERDYNLNKAAQLKYGRLETLQRELEATEAQLLELQAAGGTFLRDQVTEADIAEIVAKWTGIPLQKLMASERQKLLQLEQVLHQRVIGQSDAVAAVAAAIRRARAGMKDPARPIGSFLFMGPTGVGKTELARALAEALFDDENALVRIDMSEYMEKHAVSRMIGAPPGYVGFDSGGQLTEAIRRRPYAVVLFDEVEKAHPEVFNVLLQVLDDGRITDSQGRTVDFRNTVIIMTSNLGSEHILDLAADDSRYEEMRQRVLQSAQKYFRPEFLNRIDDVILFHGLGRTELAQIAQIQLRRVEKLLADQKIHLRLTPAALDHLVAVGFDPVYGARPLKRAIQRELENPLAVKLLEEVFTPGDTILVDLVGSELTFRAVSPAGTGDRDTVSAS</sequence>
<name>CLPB2_THEVB</name>
<evidence type="ECO:0000250" key="1"/>
<evidence type="ECO:0000255" key="2">
    <source>
        <dbReference type="PROSITE-ProRule" id="PRU01251"/>
    </source>
</evidence>
<evidence type="ECO:0000305" key="3"/>
<dbReference type="EMBL" id="BA000039">
    <property type="protein sequence ID" value="BAC10004.1"/>
    <property type="molecule type" value="Genomic_DNA"/>
</dbReference>
<dbReference type="RefSeq" id="NP_683242.1">
    <property type="nucleotide sequence ID" value="NC_004113.1"/>
</dbReference>
<dbReference type="RefSeq" id="WP_011058284.1">
    <property type="nucleotide sequence ID" value="NC_004113.1"/>
</dbReference>
<dbReference type="SMR" id="Q8DG71"/>
<dbReference type="STRING" id="197221.gene:10749073"/>
<dbReference type="EnsemblBacteria" id="BAC10004">
    <property type="protein sequence ID" value="BAC10004"/>
    <property type="gene ID" value="BAC10004"/>
</dbReference>
<dbReference type="KEGG" id="tel:tll2453"/>
<dbReference type="PATRIC" id="fig|197221.4.peg.2577"/>
<dbReference type="eggNOG" id="COG0542">
    <property type="taxonomic scope" value="Bacteria"/>
</dbReference>
<dbReference type="Proteomes" id="UP000000440">
    <property type="component" value="Chromosome"/>
</dbReference>
<dbReference type="GO" id="GO:0005737">
    <property type="term" value="C:cytoplasm"/>
    <property type="evidence" value="ECO:0007669"/>
    <property type="project" value="UniProtKB-SubCell"/>
</dbReference>
<dbReference type="GO" id="GO:0005524">
    <property type="term" value="F:ATP binding"/>
    <property type="evidence" value="ECO:0007669"/>
    <property type="project" value="UniProtKB-KW"/>
</dbReference>
<dbReference type="GO" id="GO:0016887">
    <property type="term" value="F:ATP hydrolysis activity"/>
    <property type="evidence" value="ECO:0007669"/>
    <property type="project" value="InterPro"/>
</dbReference>
<dbReference type="GO" id="GO:0034605">
    <property type="term" value="P:cellular response to heat"/>
    <property type="evidence" value="ECO:0007669"/>
    <property type="project" value="TreeGrafter"/>
</dbReference>
<dbReference type="GO" id="GO:0042026">
    <property type="term" value="P:protein refolding"/>
    <property type="evidence" value="ECO:0007669"/>
    <property type="project" value="InterPro"/>
</dbReference>
<dbReference type="CDD" id="cd00009">
    <property type="entry name" value="AAA"/>
    <property type="match status" value="1"/>
</dbReference>
<dbReference type="CDD" id="cd19499">
    <property type="entry name" value="RecA-like_ClpB_Hsp104-like"/>
    <property type="match status" value="1"/>
</dbReference>
<dbReference type="FunFam" id="1.10.8.60:FF:000017">
    <property type="entry name" value="ATP-dependent chaperone ClpB"/>
    <property type="match status" value="1"/>
</dbReference>
<dbReference type="FunFam" id="3.40.50.300:FF:000120">
    <property type="entry name" value="ATP-dependent chaperone ClpB"/>
    <property type="match status" value="1"/>
</dbReference>
<dbReference type="FunFam" id="3.40.50.300:FF:000025">
    <property type="entry name" value="ATP-dependent Clp protease subunit"/>
    <property type="match status" value="1"/>
</dbReference>
<dbReference type="FunFam" id="3.40.50.300:FF:000010">
    <property type="entry name" value="Chaperone clpB 1, putative"/>
    <property type="match status" value="1"/>
</dbReference>
<dbReference type="Gene3D" id="1.10.8.60">
    <property type="match status" value="1"/>
</dbReference>
<dbReference type="Gene3D" id="1.10.1780.10">
    <property type="entry name" value="Clp, N-terminal domain"/>
    <property type="match status" value="1"/>
</dbReference>
<dbReference type="Gene3D" id="3.40.50.300">
    <property type="entry name" value="P-loop containing nucleotide triphosphate hydrolases"/>
    <property type="match status" value="3"/>
</dbReference>
<dbReference type="InterPro" id="IPR003593">
    <property type="entry name" value="AAA+_ATPase"/>
</dbReference>
<dbReference type="InterPro" id="IPR003959">
    <property type="entry name" value="ATPase_AAA_core"/>
</dbReference>
<dbReference type="InterPro" id="IPR017730">
    <property type="entry name" value="Chaperonin_ClpB"/>
</dbReference>
<dbReference type="InterPro" id="IPR019489">
    <property type="entry name" value="Clp_ATPase_C"/>
</dbReference>
<dbReference type="InterPro" id="IPR036628">
    <property type="entry name" value="Clp_N_dom_sf"/>
</dbReference>
<dbReference type="InterPro" id="IPR004176">
    <property type="entry name" value="Clp_R_dom"/>
</dbReference>
<dbReference type="InterPro" id="IPR001270">
    <property type="entry name" value="ClpA/B"/>
</dbReference>
<dbReference type="InterPro" id="IPR018368">
    <property type="entry name" value="ClpA/B_CS1"/>
</dbReference>
<dbReference type="InterPro" id="IPR028299">
    <property type="entry name" value="ClpA/B_CS2"/>
</dbReference>
<dbReference type="InterPro" id="IPR041546">
    <property type="entry name" value="ClpA/ClpB_AAA_lid"/>
</dbReference>
<dbReference type="InterPro" id="IPR050130">
    <property type="entry name" value="ClpA_ClpB"/>
</dbReference>
<dbReference type="InterPro" id="IPR027417">
    <property type="entry name" value="P-loop_NTPase"/>
</dbReference>
<dbReference type="NCBIfam" id="TIGR03346">
    <property type="entry name" value="chaperone_ClpB"/>
    <property type="match status" value="1"/>
</dbReference>
<dbReference type="PANTHER" id="PTHR11638">
    <property type="entry name" value="ATP-DEPENDENT CLP PROTEASE"/>
    <property type="match status" value="1"/>
</dbReference>
<dbReference type="PANTHER" id="PTHR11638:SF18">
    <property type="entry name" value="HEAT SHOCK PROTEIN 104"/>
    <property type="match status" value="1"/>
</dbReference>
<dbReference type="Pfam" id="PF00004">
    <property type="entry name" value="AAA"/>
    <property type="match status" value="1"/>
</dbReference>
<dbReference type="Pfam" id="PF07724">
    <property type="entry name" value="AAA_2"/>
    <property type="match status" value="1"/>
</dbReference>
<dbReference type="Pfam" id="PF17871">
    <property type="entry name" value="AAA_lid_9"/>
    <property type="match status" value="1"/>
</dbReference>
<dbReference type="Pfam" id="PF02861">
    <property type="entry name" value="Clp_N"/>
    <property type="match status" value="2"/>
</dbReference>
<dbReference type="Pfam" id="PF10431">
    <property type="entry name" value="ClpB_D2-small"/>
    <property type="match status" value="1"/>
</dbReference>
<dbReference type="PRINTS" id="PR00300">
    <property type="entry name" value="CLPPROTEASEA"/>
</dbReference>
<dbReference type="SMART" id="SM00382">
    <property type="entry name" value="AAA"/>
    <property type="match status" value="2"/>
</dbReference>
<dbReference type="SMART" id="SM01086">
    <property type="entry name" value="ClpB_D2-small"/>
    <property type="match status" value="1"/>
</dbReference>
<dbReference type="SUPFAM" id="SSF81923">
    <property type="entry name" value="Double Clp-N motif"/>
    <property type="match status" value="1"/>
</dbReference>
<dbReference type="SUPFAM" id="SSF52540">
    <property type="entry name" value="P-loop containing nucleoside triphosphate hydrolases"/>
    <property type="match status" value="2"/>
</dbReference>
<dbReference type="PROSITE" id="PS51903">
    <property type="entry name" value="CLP_R"/>
    <property type="match status" value="1"/>
</dbReference>
<dbReference type="PROSITE" id="PS00870">
    <property type="entry name" value="CLPAB_1"/>
    <property type="match status" value="1"/>
</dbReference>
<dbReference type="PROSITE" id="PS00871">
    <property type="entry name" value="CLPAB_2"/>
    <property type="match status" value="1"/>
</dbReference>
<accession>Q8DG71</accession>
<keyword id="KW-0067">ATP-binding</keyword>
<keyword id="KW-0143">Chaperone</keyword>
<keyword id="KW-0175">Coiled coil</keyword>
<keyword id="KW-0963">Cytoplasm</keyword>
<keyword id="KW-0547">Nucleotide-binding</keyword>
<keyword id="KW-1185">Reference proteome</keyword>
<keyword id="KW-0677">Repeat</keyword>
<keyword id="KW-0346">Stress response</keyword>
<comment type="function">
    <text evidence="1">Part of a stress-induced multi-chaperone system, it is involved in the recovery of the cell from heat-induced damage, in cooperation with DnaK, DnaJ and GrpE. Acts before DnaK, in the processing of protein aggregates. Protein binding stimulates the ATPase activity; ATP hydrolysis unfolds the denatured protein aggregates, which probably helps expose new hydrophobic binding sites on the surface of ClpB-bound aggregates, contributing to the solubilization and refolding of denatured protein aggregates by DnaK (By similarity).</text>
</comment>
<comment type="subunit">
    <text evidence="1">Homohexamer. The oligomerization is ATP-dependent (By similarity).</text>
</comment>
<comment type="subcellular location">
    <subcellularLocation>
        <location evidence="3">Cytoplasm</location>
    </subcellularLocation>
</comment>
<comment type="domain">
    <text evidence="1">The Clp repeat (R) domain probably functions as a substrate-discriminating domain, recruiting aggregated proteins to the ClpB hexamer and/or stabilizing bound proteins. The NBD2 domain is responsible for oligomerization, whereas the NBD1 domain stabilizes the hexamer probably in an ATP-dependent manner. The movement of the coiled-coil domain is essential for ClpB ability to rescue proteins from an aggregated state, probably by pulling apart large aggregated proteins, which are bound between the coiled-coils motifs of adjacent ClpB subunits in the functional hexamer (By similarity).</text>
</comment>
<comment type="similarity">
    <text evidence="3">Belongs to the ClpA/ClpB family.</text>
</comment>
<feature type="chain" id="PRO_0000191188" description="Chaperone protein ClpB 2">
    <location>
        <begin position="1"/>
        <end position="887"/>
    </location>
</feature>
<feature type="domain" description="Clp R" evidence="2">
    <location>
        <begin position="6"/>
        <end position="147"/>
    </location>
</feature>
<feature type="region of interest" description="Repeat 1" evidence="2">
    <location>
        <begin position="9"/>
        <end position="73"/>
    </location>
</feature>
<feature type="region of interest" description="Repeat 2" evidence="2">
    <location>
        <begin position="84"/>
        <end position="147"/>
    </location>
</feature>
<feature type="region of interest" description="NBD1" evidence="1">
    <location>
        <begin position="160"/>
        <end position="342"/>
    </location>
</feature>
<feature type="region of interest" description="Linker" evidence="1">
    <location>
        <begin position="343"/>
        <end position="559"/>
    </location>
</feature>
<feature type="region of interest" description="NBD2" evidence="1">
    <location>
        <begin position="569"/>
        <end position="780"/>
    </location>
</feature>
<feature type="region of interest" description="C-terminal" evidence="1">
    <location>
        <begin position="781"/>
        <end position="887"/>
    </location>
</feature>
<feature type="coiled-coil region" evidence="1">
    <location>
        <begin position="393"/>
        <end position="535"/>
    </location>
</feature>
<feature type="binding site" evidence="1">
    <location>
        <begin position="207"/>
        <end position="214"/>
    </location>
    <ligand>
        <name>ATP</name>
        <dbReference type="ChEBI" id="CHEBI:30616"/>
        <label>1</label>
    </ligand>
</feature>
<feature type="binding site" evidence="1">
    <location>
        <begin position="619"/>
        <end position="626"/>
    </location>
    <ligand>
        <name>ATP</name>
        <dbReference type="ChEBI" id="CHEBI:30616"/>
        <label>2</label>
    </ligand>
</feature>
<protein>
    <recommendedName>
        <fullName>Chaperone protein ClpB 2</fullName>
    </recommendedName>
</protein>
<gene>
    <name type="primary">clpB2</name>
    <name type="ordered locus">tll2453</name>
</gene>
<reference key="1">
    <citation type="journal article" date="2002" name="DNA Res.">
        <title>Complete genome structure of the thermophilic cyanobacterium Thermosynechococcus elongatus BP-1.</title>
        <authorList>
            <person name="Nakamura Y."/>
            <person name="Kaneko T."/>
            <person name="Sato S."/>
            <person name="Ikeuchi M."/>
            <person name="Katoh H."/>
            <person name="Sasamoto S."/>
            <person name="Watanabe A."/>
            <person name="Iriguchi M."/>
            <person name="Kawashima K."/>
            <person name="Kimura T."/>
            <person name="Kishida Y."/>
            <person name="Kiyokawa C."/>
            <person name="Kohara M."/>
            <person name="Matsumoto M."/>
            <person name="Matsuno A."/>
            <person name="Nakazaki N."/>
            <person name="Shimpo S."/>
            <person name="Sugimoto M."/>
            <person name="Takeuchi C."/>
            <person name="Yamada M."/>
            <person name="Tabata S."/>
        </authorList>
    </citation>
    <scope>NUCLEOTIDE SEQUENCE [LARGE SCALE GENOMIC DNA]</scope>
    <source>
        <strain>NIES-2133 / IAM M-273 / BP-1</strain>
    </source>
</reference>
<proteinExistence type="inferred from homology"/>